<gene>
    <name type="primary">RKI1</name>
    <name type="ordered locus">CND05060</name>
</gene>
<name>RPIA_CRYNJ</name>
<accession>P0CR18</accession>
<accession>Q55UH9</accession>
<accession>Q5KHW6</accession>
<reference key="1">
    <citation type="journal article" date="2005" name="Science">
        <title>The genome of the basidiomycetous yeast and human pathogen Cryptococcus neoformans.</title>
        <authorList>
            <person name="Loftus B.J."/>
            <person name="Fung E."/>
            <person name="Roncaglia P."/>
            <person name="Rowley D."/>
            <person name="Amedeo P."/>
            <person name="Bruno D."/>
            <person name="Vamathevan J."/>
            <person name="Miranda M."/>
            <person name="Anderson I.J."/>
            <person name="Fraser J.A."/>
            <person name="Allen J.E."/>
            <person name="Bosdet I.E."/>
            <person name="Brent M.R."/>
            <person name="Chiu R."/>
            <person name="Doering T.L."/>
            <person name="Donlin M.J."/>
            <person name="D'Souza C.A."/>
            <person name="Fox D.S."/>
            <person name="Grinberg V."/>
            <person name="Fu J."/>
            <person name="Fukushima M."/>
            <person name="Haas B.J."/>
            <person name="Huang J.C."/>
            <person name="Janbon G."/>
            <person name="Jones S.J.M."/>
            <person name="Koo H.L."/>
            <person name="Krzywinski M.I."/>
            <person name="Kwon-Chung K.J."/>
            <person name="Lengeler K.B."/>
            <person name="Maiti R."/>
            <person name="Marra M.A."/>
            <person name="Marra R.E."/>
            <person name="Mathewson C.A."/>
            <person name="Mitchell T.G."/>
            <person name="Pertea M."/>
            <person name="Riggs F.R."/>
            <person name="Salzberg S.L."/>
            <person name="Schein J.E."/>
            <person name="Shvartsbeyn A."/>
            <person name="Shin H."/>
            <person name="Shumway M."/>
            <person name="Specht C.A."/>
            <person name="Suh B.B."/>
            <person name="Tenney A."/>
            <person name="Utterback T.R."/>
            <person name="Wickes B.L."/>
            <person name="Wortman J.R."/>
            <person name="Wye N.H."/>
            <person name="Kronstad J.W."/>
            <person name="Lodge J.K."/>
            <person name="Heitman J."/>
            <person name="Davis R.W."/>
            <person name="Fraser C.M."/>
            <person name="Hyman R.W."/>
        </authorList>
    </citation>
    <scope>NUCLEOTIDE SEQUENCE [LARGE SCALE GENOMIC DNA]</scope>
    <source>
        <strain>JEC21 / ATCC MYA-565</strain>
    </source>
</reference>
<keyword id="KW-0963">Cytoplasm</keyword>
<keyword id="KW-0413">Isomerase</keyword>
<keyword id="KW-1185">Reference proteome</keyword>
<feature type="chain" id="PRO_0000339886" description="Ribose-5-phosphate isomerase">
    <location>
        <begin position="1"/>
        <end position="302"/>
    </location>
</feature>
<comment type="catalytic activity">
    <reaction>
        <text>aldehydo-D-ribose 5-phosphate = D-ribulose 5-phosphate</text>
        <dbReference type="Rhea" id="RHEA:14657"/>
        <dbReference type="ChEBI" id="CHEBI:58121"/>
        <dbReference type="ChEBI" id="CHEBI:58273"/>
        <dbReference type="EC" id="5.3.1.6"/>
    </reaction>
</comment>
<comment type="pathway">
    <text>Carbohydrate degradation; pentose phosphate pathway; D-ribose 5-phosphate from D-ribulose 5-phosphate (non-oxidative stage): step 1/1.</text>
</comment>
<comment type="subcellular location">
    <subcellularLocation>
        <location evidence="1">Cytoplasm</location>
    </subcellularLocation>
</comment>
<comment type="similarity">
    <text evidence="1">Belongs to the ribose 5-phosphate isomerase family.</text>
</comment>
<organism>
    <name type="scientific">Cryptococcus neoformans var. neoformans serotype D (strain JEC21 / ATCC MYA-565)</name>
    <name type="common">Filobasidiella neoformans</name>
    <dbReference type="NCBI Taxonomy" id="214684"/>
    <lineage>
        <taxon>Eukaryota</taxon>
        <taxon>Fungi</taxon>
        <taxon>Dikarya</taxon>
        <taxon>Basidiomycota</taxon>
        <taxon>Agaricomycotina</taxon>
        <taxon>Tremellomycetes</taxon>
        <taxon>Tremellales</taxon>
        <taxon>Cryptococcaceae</taxon>
        <taxon>Cryptococcus</taxon>
        <taxon>Cryptococcus neoformans species complex</taxon>
    </lineage>
</organism>
<proteinExistence type="inferred from homology"/>
<evidence type="ECO:0000305" key="1"/>
<protein>
    <recommendedName>
        <fullName>Ribose-5-phosphate isomerase</fullName>
        <ecNumber>5.3.1.6</ecNumber>
    </recommendedName>
    <alternativeName>
        <fullName>D-ribose-5-phosphate ketol-isomerase</fullName>
    </alternativeName>
    <alternativeName>
        <fullName>Phosphoriboisomerase</fullName>
    </alternativeName>
</protein>
<dbReference type="EC" id="5.3.1.6"/>
<dbReference type="EMBL" id="AE017344">
    <property type="protein sequence ID" value="AAW43129.1"/>
    <property type="molecule type" value="Genomic_DNA"/>
</dbReference>
<dbReference type="RefSeq" id="XP_570436.1">
    <property type="nucleotide sequence ID" value="XM_570436.1"/>
</dbReference>
<dbReference type="SMR" id="P0CR18"/>
<dbReference type="FunCoup" id="P0CR18">
    <property type="interactions" value="550"/>
</dbReference>
<dbReference type="STRING" id="214684.P0CR18"/>
<dbReference type="PaxDb" id="214684-P0CR18"/>
<dbReference type="EnsemblFungi" id="AAW43129">
    <property type="protein sequence ID" value="AAW43129"/>
    <property type="gene ID" value="CND05060"/>
</dbReference>
<dbReference type="GeneID" id="3257417"/>
<dbReference type="KEGG" id="cne:CND05060"/>
<dbReference type="VEuPathDB" id="FungiDB:CND05060"/>
<dbReference type="eggNOG" id="KOG3075">
    <property type="taxonomic scope" value="Eukaryota"/>
</dbReference>
<dbReference type="HOGENOM" id="CLU_056590_0_1_1"/>
<dbReference type="InParanoid" id="P0CR18"/>
<dbReference type="OMA" id="ACHVQEK"/>
<dbReference type="OrthoDB" id="1555531at2759"/>
<dbReference type="UniPathway" id="UPA00115">
    <property type="reaction ID" value="UER00412"/>
</dbReference>
<dbReference type="Proteomes" id="UP000002149">
    <property type="component" value="Chromosome 4"/>
</dbReference>
<dbReference type="GO" id="GO:0005737">
    <property type="term" value="C:cytoplasm"/>
    <property type="evidence" value="ECO:0000318"/>
    <property type="project" value="GO_Central"/>
</dbReference>
<dbReference type="GO" id="GO:0004751">
    <property type="term" value="F:ribose-5-phosphate isomerase activity"/>
    <property type="evidence" value="ECO:0000318"/>
    <property type="project" value="GO_Central"/>
</dbReference>
<dbReference type="GO" id="GO:0006014">
    <property type="term" value="P:D-ribose metabolic process"/>
    <property type="evidence" value="ECO:0000318"/>
    <property type="project" value="GO_Central"/>
</dbReference>
<dbReference type="GO" id="GO:0009052">
    <property type="term" value="P:pentose-phosphate shunt, non-oxidative branch"/>
    <property type="evidence" value="ECO:0000318"/>
    <property type="project" value="GO_Central"/>
</dbReference>
<dbReference type="CDD" id="cd01398">
    <property type="entry name" value="RPI_A"/>
    <property type="match status" value="1"/>
</dbReference>
<dbReference type="FunFam" id="3.40.50.1360:FF:000014">
    <property type="entry name" value="Ribose 5-phosphate isomerase"/>
    <property type="match status" value="1"/>
</dbReference>
<dbReference type="FunFam" id="3.30.70.260:FF:000053">
    <property type="entry name" value="Ribose-5-phosphate isomerase, putative"/>
    <property type="match status" value="1"/>
</dbReference>
<dbReference type="Gene3D" id="3.30.70.260">
    <property type="match status" value="1"/>
</dbReference>
<dbReference type="Gene3D" id="3.40.50.1360">
    <property type="match status" value="1"/>
</dbReference>
<dbReference type="InterPro" id="IPR037171">
    <property type="entry name" value="NagB/RpiA_transferase-like"/>
</dbReference>
<dbReference type="InterPro" id="IPR004788">
    <property type="entry name" value="Ribose5P_isomerase_type_A"/>
</dbReference>
<dbReference type="NCBIfam" id="TIGR00021">
    <property type="entry name" value="rpiA"/>
    <property type="match status" value="1"/>
</dbReference>
<dbReference type="PANTHER" id="PTHR11934">
    <property type="entry name" value="RIBOSE-5-PHOSPHATE ISOMERASE"/>
    <property type="match status" value="1"/>
</dbReference>
<dbReference type="PANTHER" id="PTHR11934:SF0">
    <property type="entry name" value="RIBOSE-5-PHOSPHATE ISOMERASE"/>
    <property type="match status" value="1"/>
</dbReference>
<dbReference type="Pfam" id="PF06026">
    <property type="entry name" value="Rib_5-P_isom_A"/>
    <property type="match status" value="1"/>
</dbReference>
<dbReference type="SUPFAM" id="SSF75445">
    <property type="entry name" value="D-ribose-5-phosphate isomerase (RpiA), lid domain"/>
    <property type="match status" value="1"/>
</dbReference>
<dbReference type="SUPFAM" id="SSF100950">
    <property type="entry name" value="NagB/RpiA/CoA transferase-like"/>
    <property type="match status" value="1"/>
</dbReference>
<sequence length="302" mass="32100">MPSPAVDLLKQKTASLPNAPISVVAANTFVPPTQPVTAGNQLPTSVPLPVLPAVEAAKRLAAYAAVDRHIAHEHKVIGIGSGSTVPYVVDRILAQGFEANKDRVFLPTGFQSKELIVKAGLTLGDVDQYARIDVTIDGADEVDNELNSIKGGGACQLREKVLAEAADTWIIVADYRKNSEVLGTSWTKGIPIEVVPFAYAKVLTNLAHMGSPHVLPNGQPGLSLRMGKMKAGPVVSDNGNFIIDAPFAEELMRQPEELLHKIKMLTGVVEVGLFCGMAKAAYFGNEDGSVTIRSDDGTISQL</sequence>